<feature type="chain" id="PRO_0000154154" description="Uncharacterized PabA-like protein PM1464">
    <location>
        <begin position="1"/>
        <end position="324"/>
    </location>
</feature>
<reference key="1">
    <citation type="journal article" date="2001" name="Proc. Natl. Acad. Sci. U.S.A.">
        <title>Complete genomic sequence of Pasteurella multocida Pm70.</title>
        <authorList>
            <person name="May B.J."/>
            <person name="Zhang Q."/>
            <person name="Li L.L."/>
            <person name="Paustian M.L."/>
            <person name="Whittam T.S."/>
            <person name="Kapur V."/>
        </authorList>
    </citation>
    <scope>NUCLEOTIDE SEQUENCE [LARGE SCALE GENOMIC DNA]</scope>
    <source>
        <strain>Pm70</strain>
    </source>
</reference>
<comment type="similarity">
    <text evidence="1">To the C-terminal of para-aminobenzoate synthase component I.</text>
</comment>
<proteinExistence type="predicted"/>
<dbReference type="EMBL" id="AE004439">
    <property type="protein sequence ID" value="AAK03548.1"/>
    <property type="molecule type" value="Genomic_DNA"/>
</dbReference>
<dbReference type="RefSeq" id="WP_010907177.1">
    <property type="nucleotide sequence ID" value="NC_002663.1"/>
</dbReference>
<dbReference type="SMR" id="Q9CKY6"/>
<dbReference type="STRING" id="272843.PM1464"/>
<dbReference type="EnsemblBacteria" id="AAK03548">
    <property type="protein sequence ID" value="AAK03548"/>
    <property type="gene ID" value="PM1464"/>
</dbReference>
<dbReference type="KEGG" id="pmu:PM1464"/>
<dbReference type="PATRIC" id="fig|272843.6.peg.1480"/>
<dbReference type="HOGENOM" id="CLU_006493_1_0_6"/>
<dbReference type="OrthoDB" id="9803598at2"/>
<dbReference type="Proteomes" id="UP000000809">
    <property type="component" value="Chromosome"/>
</dbReference>
<dbReference type="GO" id="GO:0046820">
    <property type="term" value="F:4-amino-4-deoxychorismate synthase activity"/>
    <property type="evidence" value="ECO:0007669"/>
    <property type="project" value="TreeGrafter"/>
</dbReference>
<dbReference type="GO" id="GO:0000162">
    <property type="term" value="P:L-tryptophan biosynthetic process"/>
    <property type="evidence" value="ECO:0007669"/>
    <property type="project" value="TreeGrafter"/>
</dbReference>
<dbReference type="Gene3D" id="3.60.120.10">
    <property type="entry name" value="Anthranilate synthase"/>
    <property type="match status" value="1"/>
</dbReference>
<dbReference type="InterPro" id="IPR005801">
    <property type="entry name" value="ADC_synthase"/>
</dbReference>
<dbReference type="InterPro" id="IPR019999">
    <property type="entry name" value="Anth_synth_I-like"/>
</dbReference>
<dbReference type="InterPro" id="IPR015890">
    <property type="entry name" value="Chorismate_C"/>
</dbReference>
<dbReference type="NCBIfam" id="NF005486">
    <property type="entry name" value="PRK07093.1"/>
    <property type="match status" value="1"/>
</dbReference>
<dbReference type="PANTHER" id="PTHR11236">
    <property type="entry name" value="AMINOBENZOATE/ANTHRANILATE SYNTHASE"/>
    <property type="match status" value="1"/>
</dbReference>
<dbReference type="PANTHER" id="PTHR11236:SF50">
    <property type="entry name" value="AMINODEOXYCHORISMATE SYNTHASE COMPONENT 1"/>
    <property type="match status" value="1"/>
</dbReference>
<dbReference type="Pfam" id="PF00425">
    <property type="entry name" value="Chorismate_bind"/>
    <property type="match status" value="1"/>
</dbReference>
<dbReference type="PRINTS" id="PR00095">
    <property type="entry name" value="ANTSNTHASEI"/>
</dbReference>
<dbReference type="SUPFAM" id="SSF56322">
    <property type="entry name" value="ADC synthase"/>
    <property type="match status" value="1"/>
</dbReference>
<sequence>MSLHAFIQQANQFGEQRQPFFFLIDFEQQQPIICPLAQAAELGLFFAIRGQQNVNWQTEMPHKPFELHKFPISKAAYQRGFDLVQKELQKGNSYLLNLTYPTEINTNWRLEQVFQQTTAPYKLYYRDRFVCFSPECFVNIHHNQIYTYPMKGTIDATLPEAEKRLLDSDKERQEHYTIVDLMRNDLATVAEKVEVTRFRYVEKIQTQKGAILQTSSEIRGDLAENWQARIGTILATLLPAGSISGAPKEKTVQIIHAAEQRPRGYYTGIFGLFDGESLQSAVAIRFIEQVDEKLIFRSGGGITILSELEDEYQELIQKVYVPVG</sequence>
<keyword id="KW-1185">Reference proteome</keyword>
<protein>
    <recommendedName>
        <fullName>Uncharacterized PabA-like protein PM1464</fullName>
    </recommendedName>
</protein>
<name>Y1464_PASMU</name>
<evidence type="ECO:0000305" key="1"/>
<accession>Q9CKY6</accession>
<organism>
    <name type="scientific">Pasteurella multocida (strain Pm70)</name>
    <dbReference type="NCBI Taxonomy" id="272843"/>
    <lineage>
        <taxon>Bacteria</taxon>
        <taxon>Pseudomonadati</taxon>
        <taxon>Pseudomonadota</taxon>
        <taxon>Gammaproteobacteria</taxon>
        <taxon>Pasteurellales</taxon>
        <taxon>Pasteurellaceae</taxon>
        <taxon>Pasteurella</taxon>
    </lineage>
</organism>
<gene>
    <name type="ordered locus">PM1464</name>
</gene>